<sequence>MSRVCQVTGKRPVTGNNRSHALNATKRRFLPNLHSHRFWVESEKRFVTLRVSAKGMRVIDKKGIDTVLAELRARGEKY</sequence>
<reference key="1">
    <citation type="journal article" date="2005" name="Nucleic Acids Res.">
        <title>Genome dynamics and diversity of Shigella species, the etiologic agents of bacillary dysentery.</title>
        <authorList>
            <person name="Yang F."/>
            <person name="Yang J."/>
            <person name="Zhang X."/>
            <person name="Chen L."/>
            <person name="Jiang Y."/>
            <person name="Yan Y."/>
            <person name="Tang X."/>
            <person name="Wang J."/>
            <person name="Xiong Z."/>
            <person name="Dong J."/>
            <person name="Xue Y."/>
            <person name="Zhu Y."/>
            <person name="Xu X."/>
            <person name="Sun L."/>
            <person name="Chen S."/>
            <person name="Nie H."/>
            <person name="Peng J."/>
            <person name="Xu J."/>
            <person name="Wang Y."/>
            <person name="Yuan Z."/>
            <person name="Wen Y."/>
            <person name="Yao Z."/>
            <person name="Shen Y."/>
            <person name="Qiang B."/>
            <person name="Hou Y."/>
            <person name="Yu J."/>
            <person name="Jin Q."/>
        </authorList>
    </citation>
    <scope>NUCLEOTIDE SEQUENCE [LARGE SCALE GENOMIC DNA]</scope>
    <source>
        <strain>Sd197</strain>
    </source>
</reference>
<name>RL28_SHIDS</name>
<gene>
    <name evidence="1" type="primary">rpmB</name>
    <name type="ordered locus">SDY_4067</name>
</gene>
<organism>
    <name type="scientific">Shigella dysenteriae serotype 1 (strain Sd197)</name>
    <dbReference type="NCBI Taxonomy" id="300267"/>
    <lineage>
        <taxon>Bacteria</taxon>
        <taxon>Pseudomonadati</taxon>
        <taxon>Pseudomonadota</taxon>
        <taxon>Gammaproteobacteria</taxon>
        <taxon>Enterobacterales</taxon>
        <taxon>Enterobacteriaceae</taxon>
        <taxon>Shigella</taxon>
    </lineage>
</organism>
<feature type="chain" id="PRO_1000007356" description="Large ribosomal subunit protein bL28">
    <location>
        <begin position="1"/>
        <end position="78"/>
    </location>
</feature>
<dbReference type="EMBL" id="CP000034">
    <property type="protein sequence ID" value="ABB63985.1"/>
    <property type="molecule type" value="Genomic_DNA"/>
</dbReference>
<dbReference type="RefSeq" id="WP_000091955.1">
    <property type="nucleotide sequence ID" value="NC_007606.1"/>
</dbReference>
<dbReference type="RefSeq" id="YP_405476.1">
    <property type="nucleotide sequence ID" value="NC_007606.1"/>
</dbReference>
<dbReference type="SMR" id="Q329M0"/>
<dbReference type="STRING" id="300267.SDY_4067"/>
<dbReference type="EnsemblBacteria" id="ABB63985">
    <property type="protein sequence ID" value="ABB63985"/>
    <property type="gene ID" value="SDY_4067"/>
</dbReference>
<dbReference type="GeneID" id="93778350"/>
<dbReference type="KEGG" id="sdy:SDY_4067"/>
<dbReference type="PATRIC" id="fig|300267.13.peg.4783"/>
<dbReference type="HOGENOM" id="CLU_064548_3_1_6"/>
<dbReference type="Proteomes" id="UP000002716">
    <property type="component" value="Chromosome"/>
</dbReference>
<dbReference type="GO" id="GO:0022625">
    <property type="term" value="C:cytosolic large ribosomal subunit"/>
    <property type="evidence" value="ECO:0007669"/>
    <property type="project" value="TreeGrafter"/>
</dbReference>
<dbReference type="GO" id="GO:0003735">
    <property type="term" value="F:structural constituent of ribosome"/>
    <property type="evidence" value="ECO:0007669"/>
    <property type="project" value="InterPro"/>
</dbReference>
<dbReference type="GO" id="GO:0006412">
    <property type="term" value="P:translation"/>
    <property type="evidence" value="ECO:0007669"/>
    <property type="project" value="UniProtKB-UniRule"/>
</dbReference>
<dbReference type="FunFam" id="2.30.170.40:FF:000001">
    <property type="entry name" value="50S ribosomal protein L28"/>
    <property type="match status" value="1"/>
</dbReference>
<dbReference type="Gene3D" id="2.30.170.40">
    <property type="entry name" value="Ribosomal protein L28/L24"/>
    <property type="match status" value="1"/>
</dbReference>
<dbReference type="HAMAP" id="MF_00373">
    <property type="entry name" value="Ribosomal_bL28"/>
    <property type="match status" value="1"/>
</dbReference>
<dbReference type="InterPro" id="IPR026569">
    <property type="entry name" value="Ribosomal_bL28"/>
</dbReference>
<dbReference type="InterPro" id="IPR034704">
    <property type="entry name" value="Ribosomal_bL28/bL31-like_sf"/>
</dbReference>
<dbReference type="InterPro" id="IPR001383">
    <property type="entry name" value="Ribosomal_bL28_bact-type"/>
</dbReference>
<dbReference type="InterPro" id="IPR037147">
    <property type="entry name" value="Ribosomal_bL28_sf"/>
</dbReference>
<dbReference type="NCBIfam" id="TIGR00009">
    <property type="entry name" value="L28"/>
    <property type="match status" value="1"/>
</dbReference>
<dbReference type="PANTHER" id="PTHR13528">
    <property type="entry name" value="39S RIBOSOMAL PROTEIN L28, MITOCHONDRIAL"/>
    <property type="match status" value="1"/>
</dbReference>
<dbReference type="PANTHER" id="PTHR13528:SF2">
    <property type="entry name" value="LARGE RIBOSOMAL SUBUNIT PROTEIN BL28M"/>
    <property type="match status" value="1"/>
</dbReference>
<dbReference type="Pfam" id="PF00830">
    <property type="entry name" value="Ribosomal_L28"/>
    <property type="match status" value="1"/>
</dbReference>
<dbReference type="SUPFAM" id="SSF143800">
    <property type="entry name" value="L28p-like"/>
    <property type="match status" value="1"/>
</dbReference>
<comment type="similarity">
    <text evidence="1">Belongs to the bacterial ribosomal protein bL28 family.</text>
</comment>
<proteinExistence type="inferred from homology"/>
<keyword id="KW-1185">Reference proteome</keyword>
<keyword id="KW-0687">Ribonucleoprotein</keyword>
<keyword id="KW-0689">Ribosomal protein</keyword>
<protein>
    <recommendedName>
        <fullName evidence="1">Large ribosomal subunit protein bL28</fullName>
    </recommendedName>
    <alternativeName>
        <fullName evidence="2">50S ribosomal protein L28</fullName>
    </alternativeName>
</protein>
<accession>Q329M0</accession>
<evidence type="ECO:0000255" key="1">
    <source>
        <dbReference type="HAMAP-Rule" id="MF_00373"/>
    </source>
</evidence>
<evidence type="ECO:0000305" key="2"/>